<accession>B7US99</accession>
<proteinExistence type="inferred from homology"/>
<feature type="chain" id="PRO_1000193960" description="Large ribosomal subunit protein bL20">
    <location>
        <begin position="1"/>
        <end position="118"/>
    </location>
</feature>
<evidence type="ECO:0000255" key="1">
    <source>
        <dbReference type="HAMAP-Rule" id="MF_00382"/>
    </source>
</evidence>
<evidence type="ECO:0000305" key="2"/>
<organism>
    <name type="scientific">Escherichia coli O127:H6 (strain E2348/69 / EPEC)</name>
    <dbReference type="NCBI Taxonomy" id="574521"/>
    <lineage>
        <taxon>Bacteria</taxon>
        <taxon>Pseudomonadati</taxon>
        <taxon>Pseudomonadota</taxon>
        <taxon>Gammaproteobacteria</taxon>
        <taxon>Enterobacterales</taxon>
        <taxon>Enterobacteriaceae</taxon>
        <taxon>Escherichia</taxon>
    </lineage>
</organism>
<protein>
    <recommendedName>
        <fullName evidence="1">Large ribosomal subunit protein bL20</fullName>
    </recommendedName>
    <alternativeName>
        <fullName evidence="2">50S ribosomal protein L20</fullName>
    </alternativeName>
</protein>
<dbReference type="EMBL" id="FM180568">
    <property type="protein sequence ID" value="CAS09393.1"/>
    <property type="molecule type" value="Genomic_DNA"/>
</dbReference>
<dbReference type="RefSeq" id="WP_000124850.1">
    <property type="nucleotide sequence ID" value="NC_011601.1"/>
</dbReference>
<dbReference type="SMR" id="B7US99"/>
<dbReference type="GeneID" id="98388757"/>
<dbReference type="KEGG" id="ecg:E2348C_1845"/>
<dbReference type="HOGENOM" id="CLU_123265_0_1_6"/>
<dbReference type="Proteomes" id="UP000008205">
    <property type="component" value="Chromosome"/>
</dbReference>
<dbReference type="GO" id="GO:1990904">
    <property type="term" value="C:ribonucleoprotein complex"/>
    <property type="evidence" value="ECO:0007669"/>
    <property type="project" value="UniProtKB-KW"/>
</dbReference>
<dbReference type="GO" id="GO:0005840">
    <property type="term" value="C:ribosome"/>
    <property type="evidence" value="ECO:0007669"/>
    <property type="project" value="UniProtKB-KW"/>
</dbReference>
<dbReference type="GO" id="GO:0019843">
    <property type="term" value="F:rRNA binding"/>
    <property type="evidence" value="ECO:0007669"/>
    <property type="project" value="UniProtKB-UniRule"/>
</dbReference>
<dbReference type="GO" id="GO:0003735">
    <property type="term" value="F:structural constituent of ribosome"/>
    <property type="evidence" value="ECO:0007669"/>
    <property type="project" value="InterPro"/>
</dbReference>
<dbReference type="GO" id="GO:0000027">
    <property type="term" value="P:ribosomal large subunit assembly"/>
    <property type="evidence" value="ECO:0007669"/>
    <property type="project" value="UniProtKB-UniRule"/>
</dbReference>
<dbReference type="GO" id="GO:0006412">
    <property type="term" value="P:translation"/>
    <property type="evidence" value="ECO:0007669"/>
    <property type="project" value="InterPro"/>
</dbReference>
<dbReference type="CDD" id="cd07026">
    <property type="entry name" value="Ribosomal_L20"/>
    <property type="match status" value="1"/>
</dbReference>
<dbReference type="FunFam" id="1.10.1900.20:FF:000001">
    <property type="entry name" value="50S ribosomal protein L20"/>
    <property type="match status" value="1"/>
</dbReference>
<dbReference type="Gene3D" id="6.10.160.10">
    <property type="match status" value="1"/>
</dbReference>
<dbReference type="Gene3D" id="1.10.1900.20">
    <property type="entry name" value="Ribosomal protein L20"/>
    <property type="match status" value="1"/>
</dbReference>
<dbReference type="HAMAP" id="MF_00382">
    <property type="entry name" value="Ribosomal_bL20"/>
    <property type="match status" value="1"/>
</dbReference>
<dbReference type="InterPro" id="IPR005813">
    <property type="entry name" value="Ribosomal_bL20"/>
</dbReference>
<dbReference type="InterPro" id="IPR049946">
    <property type="entry name" value="RIBOSOMAL_L20_CS"/>
</dbReference>
<dbReference type="InterPro" id="IPR035566">
    <property type="entry name" value="Ribosomal_protein_bL20_C"/>
</dbReference>
<dbReference type="NCBIfam" id="TIGR01032">
    <property type="entry name" value="rplT_bact"/>
    <property type="match status" value="1"/>
</dbReference>
<dbReference type="PANTHER" id="PTHR10986">
    <property type="entry name" value="39S RIBOSOMAL PROTEIN L20"/>
    <property type="match status" value="1"/>
</dbReference>
<dbReference type="Pfam" id="PF00453">
    <property type="entry name" value="Ribosomal_L20"/>
    <property type="match status" value="1"/>
</dbReference>
<dbReference type="PRINTS" id="PR00062">
    <property type="entry name" value="RIBOSOMALL20"/>
</dbReference>
<dbReference type="SUPFAM" id="SSF74731">
    <property type="entry name" value="Ribosomal protein L20"/>
    <property type="match status" value="1"/>
</dbReference>
<dbReference type="PROSITE" id="PS00937">
    <property type="entry name" value="RIBOSOMAL_L20"/>
    <property type="match status" value="1"/>
</dbReference>
<sequence length="118" mass="13497">MARVKRGVIARARHKKILKQAKGYYGARSRVYRVAFQAVIKAGQYAYRDRRQRKRQFRQLWIARINAAARQNGISYSKFINGLKKASVEIDRKILADIAVFDKVAFTALVEKAKAALA</sequence>
<name>RL20_ECO27</name>
<gene>
    <name evidence="1" type="primary">rplT</name>
    <name type="ordered locus">E2348C_1845</name>
</gene>
<reference key="1">
    <citation type="journal article" date="2009" name="J. Bacteriol.">
        <title>Complete genome sequence and comparative genome analysis of enteropathogenic Escherichia coli O127:H6 strain E2348/69.</title>
        <authorList>
            <person name="Iguchi A."/>
            <person name="Thomson N.R."/>
            <person name="Ogura Y."/>
            <person name="Saunders D."/>
            <person name="Ooka T."/>
            <person name="Henderson I.R."/>
            <person name="Harris D."/>
            <person name="Asadulghani M."/>
            <person name="Kurokawa K."/>
            <person name="Dean P."/>
            <person name="Kenny B."/>
            <person name="Quail M.A."/>
            <person name="Thurston S."/>
            <person name="Dougan G."/>
            <person name="Hayashi T."/>
            <person name="Parkhill J."/>
            <person name="Frankel G."/>
        </authorList>
    </citation>
    <scope>NUCLEOTIDE SEQUENCE [LARGE SCALE GENOMIC DNA]</scope>
    <source>
        <strain>E2348/69 / EPEC</strain>
    </source>
</reference>
<keyword id="KW-1185">Reference proteome</keyword>
<keyword id="KW-0687">Ribonucleoprotein</keyword>
<keyword id="KW-0689">Ribosomal protein</keyword>
<keyword id="KW-0694">RNA-binding</keyword>
<keyword id="KW-0699">rRNA-binding</keyword>
<comment type="function">
    <text evidence="1">Binds directly to 23S ribosomal RNA and is necessary for the in vitro assembly process of the 50S ribosomal subunit. It is not involved in the protein synthesizing functions of that subunit.</text>
</comment>
<comment type="similarity">
    <text evidence="1">Belongs to the bacterial ribosomal protein bL20 family.</text>
</comment>